<dbReference type="EMBL" id="L22858">
    <property type="protein sequence ID" value="AAA66681.1"/>
    <property type="molecule type" value="Genomic_DNA"/>
</dbReference>
<dbReference type="PIR" id="C72856">
    <property type="entry name" value="C72856"/>
</dbReference>
<dbReference type="RefSeq" id="NP_054080.1">
    <property type="nucleotide sequence ID" value="NC_001623.1"/>
</dbReference>
<dbReference type="SMR" id="P41455"/>
<dbReference type="GeneID" id="1403883"/>
<dbReference type="KEGG" id="vg:1403883"/>
<dbReference type="OrthoDB" id="6023at10239"/>
<dbReference type="Proteomes" id="UP000008292">
    <property type="component" value="Segment"/>
</dbReference>
<dbReference type="GO" id="GO:0003676">
    <property type="term" value="F:nucleic acid binding"/>
    <property type="evidence" value="ECO:0007669"/>
    <property type="project" value="InterPro"/>
</dbReference>
<dbReference type="Gene3D" id="3.30.70.330">
    <property type="match status" value="1"/>
</dbReference>
<dbReference type="InterPro" id="IPR012677">
    <property type="entry name" value="Nucleotide-bd_a/b_plait_sf"/>
</dbReference>
<dbReference type="InterPro" id="IPR035979">
    <property type="entry name" value="RBD_domain_sf"/>
</dbReference>
<dbReference type="SUPFAM" id="SSF54928">
    <property type="entry name" value="RNA-binding domain, RBD"/>
    <property type="match status" value="1"/>
</dbReference>
<accession>P41455</accession>
<sequence length="318" mass="37532">MSKRVRERSVVSDETAKRIRQNEHCHAKNESFLGFCNLEEIDYYQCLKMQYVPDQKFDNDFILTVYRMANVVTKQVRPYNSIDEKHHYNTVRNVLILIKNARLVLSNSVKKQYYDDVLKLKKNTDLESYDPLITVFLQIGESVNEEIQKLRKALVNIFTNKPDKSDINNPDVVSYQFIFGRVQKLYNRAIKQKTKTIIVKRPTTMNRIQIDWKTLSEDEQKMTRQEIAEKIVKPCFEQFGTILHIYVCPLKHNRIIVEYANSESVQKAMTVNDDTRFTVTEFSVVQYYNVAKTEMVNQRIDIISKDIEDLRNALKSYT</sequence>
<protein>
    <recommendedName>
        <fullName>Uncharacterized 37.5 kDa protein in LEF8-FP intergenic region</fullName>
    </recommendedName>
</protein>
<organism>
    <name type="scientific">Autographa californica nuclear polyhedrosis virus</name>
    <name type="common">AcMNPV</name>
    <dbReference type="NCBI Taxonomy" id="46015"/>
    <lineage>
        <taxon>Viruses</taxon>
        <taxon>Viruses incertae sedis</taxon>
        <taxon>Naldaviricetes</taxon>
        <taxon>Lefavirales</taxon>
        <taxon>Baculoviridae</taxon>
        <taxon>Alphabaculovirus</taxon>
        <taxon>Alphabaculovirus aucalifornicae</taxon>
    </lineage>
</organism>
<feature type="chain" id="PRO_0000132982" description="Uncharacterized 37.5 kDa protein in LEF8-FP intergenic region">
    <location>
        <begin position="1"/>
        <end position="318"/>
    </location>
</feature>
<keyword id="KW-1185">Reference proteome</keyword>
<organismHost>
    <name type="scientific">Lepidoptera</name>
    <name type="common">butterflies and moths</name>
    <dbReference type="NCBI Taxonomy" id="7088"/>
</organismHost>
<reference key="1">
    <citation type="journal article" date="1994" name="Virology">
        <title>The complete DNA sequence of Autographa californica nuclear polyhedrosis virus.</title>
        <authorList>
            <person name="Ayres M.D."/>
            <person name="Howard S.C."/>
            <person name="Kuzio J."/>
            <person name="Lopez-Ferber M."/>
            <person name="Possee R.D."/>
        </authorList>
    </citation>
    <scope>NUCLEOTIDE SEQUENCE [LARGE SCALE GENOMIC DNA]</scope>
    <source>
        <strain>C6</strain>
    </source>
</reference>
<proteinExistence type="predicted"/>
<name>Y051_NPVAC</name>